<feature type="chain" id="PRO_0000376582" description="Probable cell division protein WhiA">
    <location>
        <begin position="1"/>
        <end position="303"/>
    </location>
</feature>
<feature type="DNA-binding region" description="H-T-H motif" evidence="1">
    <location>
        <begin position="272"/>
        <end position="303"/>
    </location>
</feature>
<comment type="function">
    <text evidence="1">Involved in cell division and chromosome segregation.</text>
</comment>
<comment type="similarity">
    <text evidence="1">Belongs to the WhiA family.</text>
</comment>
<accession>Q9A0R6</accession>
<accession>Q48ZQ9</accession>
<gene>
    <name evidence="1" type="primary">whiA</name>
    <name type="ordered locus">SPy_0654</name>
    <name type="ordered locus">M5005_Spy0541</name>
</gene>
<protein>
    <recommendedName>
        <fullName evidence="1">Probable cell division protein WhiA</fullName>
    </recommendedName>
</protein>
<name>WHIA_STRP1</name>
<dbReference type="EMBL" id="AE004092">
    <property type="protein sequence ID" value="AAK33617.1"/>
    <property type="molecule type" value="Genomic_DNA"/>
</dbReference>
<dbReference type="EMBL" id="CP000017">
    <property type="protein sequence ID" value="AAZ51159.1"/>
    <property type="molecule type" value="Genomic_DNA"/>
</dbReference>
<dbReference type="RefSeq" id="NP_268896.1">
    <property type="nucleotide sequence ID" value="NC_002737.2"/>
</dbReference>
<dbReference type="SMR" id="Q9A0R6"/>
<dbReference type="PaxDb" id="1314-HKU360_00551"/>
<dbReference type="KEGG" id="spy:SPy_0654"/>
<dbReference type="KEGG" id="spz:M5005_Spy0541"/>
<dbReference type="PATRIC" id="fig|160490.10.peg.556"/>
<dbReference type="HOGENOM" id="CLU_053282_0_0_9"/>
<dbReference type="OMA" id="CDAEAAW"/>
<dbReference type="Proteomes" id="UP000000750">
    <property type="component" value="Chromosome"/>
</dbReference>
<dbReference type="GO" id="GO:0003677">
    <property type="term" value="F:DNA binding"/>
    <property type="evidence" value="ECO:0007669"/>
    <property type="project" value="UniProtKB-UniRule"/>
</dbReference>
<dbReference type="GO" id="GO:0051301">
    <property type="term" value="P:cell division"/>
    <property type="evidence" value="ECO:0007669"/>
    <property type="project" value="UniProtKB-UniRule"/>
</dbReference>
<dbReference type="GO" id="GO:0043937">
    <property type="term" value="P:regulation of sporulation"/>
    <property type="evidence" value="ECO:0007669"/>
    <property type="project" value="InterPro"/>
</dbReference>
<dbReference type="Gene3D" id="3.10.28.10">
    <property type="entry name" value="Homing endonucleases"/>
    <property type="match status" value="1"/>
</dbReference>
<dbReference type="HAMAP" id="MF_01420">
    <property type="entry name" value="HTH_type_WhiA"/>
    <property type="match status" value="1"/>
</dbReference>
<dbReference type="InterPro" id="IPR027434">
    <property type="entry name" value="Homing_endonucl"/>
</dbReference>
<dbReference type="InterPro" id="IPR018478">
    <property type="entry name" value="Sporu_reg_WhiA_N_dom"/>
</dbReference>
<dbReference type="InterPro" id="IPR003802">
    <property type="entry name" value="Sporulation_regulator_WhiA"/>
</dbReference>
<dbReference type="InterPro" id="IPR023054">
    <property type="entry name" value="Sporulation_regulator_WhiA_C"/>
</dbReference>
<dbReference type="InterPro" id="IPR039518">
    <property type="entry name" value="WhiA_LAGLIDADG_dom"/>
</dbReference>
<dbReference type="NCBIfam" id="TIGR00647">
    <property type="entry name" value="DNA_bind_WhiA"/>
    <property type="match status" value="1"/>
</dbReference>
<dbReference type="PANTHER" id="PTHR37307">
    <property type="entry name" value="CELL DIVISION PROTEIN WHIA-RELATED"/>
    <property type="match status" value="1"/>
</dbReference>
<dbReference type="PANTHER" id="PTHR37307:SF1">
    <property type="entry name" value="CELL DIVISION PROTEIN WHIA-RELATED"/>
    <property type="match status" value="1"/>
</dbReference>
<dbReference type="Pfam" id="PF02650">
    <property type="entry name" value="HTH_WhiA"/>
    <property type="match status" value="1"/>
</dbReference>
<dbReference type="Pfam" id="PF14527">
    <property type="entry name" value="LAGLIDADG_WhiA"/>
    <property type="match status" value="1"/>
</dbReference>
<dbReference type="Pfam" id="PF10298">
    <property type="entry name" value="WhiA_N"/>
    <property type="match status" value="1"/>
</dbReference>
<dbReference type="SUPFAM" id="SSF55608">
    <property type="entry name" value="Homing endonucleases"/>
    <property type="match status" value="1"/>
</dbReference>
<proteinExistence type="inferred from homology"/>
<keyword id="KW-0131">Cell cycle</keyword>
<keyword id="KW-0132">Cell division</keyword>
<keyword id="KW-0238">DNA-binding</keyword>
<keyword id="KW-1185">Reference proteome</keyword>
<reference key="1">
    <citation type="journal article" date="2001" name="Proc. Natl. Acad. Sci. U.S.A.">
        <title>Complete genome sequence of an M1 strain of Streptococcus pyogenes.</title>
        <authorList>
            <person name="Ferretti J.J."/>
            <person name="McShan W.M."/>
            <person name="Ajdic D.J."/>
            <person name="Savic D.J."/>
            <person name="Savic G."/>
            <person name="Lyon K."/>
            <person name="Primeaux C."/>
            <person name="Sezate S."/>
            <person name="Suvorov A.N."/>
            <person name="Kenton S."/>
            <person name="Lai H.S."/>
            <person name="Lin S.P."/>
            <person name="Qian Y."/>
            <person name="Jia H.G."/>
            <person name="Najar F.Z."/>
            <person name="Ren Q."/>
            <person name="Zhu H."/>
            <person name="Song L."/>
            <person name="White J."/>
            <person name="Yuan X."/>
            <person name="Clifton S.W."/>
            <person name="Roe B.A."/>
            <person name="McLaughlin R.E."/>
        </authorList>
    </citation>
    <scope>NUCLEOTIDE SEQUENCE [LARGE SCALE GENOMIC DNA]</scope>
    <source>
        <strain>ATCC 700294 / SF370 / Serotype M1</strain>
    </source>
</reference>
<reference key="2">
    <citation type="journal article" date="2005" name="J. Infect. Dis.">
        <title>Evolutionary origin and emergence of a highly successful clone of serotype M1 group A Streptococcus involved multiple horizontal gene transfer events.</title>
        <authorList>
            <person name="Sumby P."/>
            <person name="Porcella S.F."/>
            <person name="Madrigal A.G."/>
            <person name="Barbian K.D."/>
            <person name="Virtaneva K."/>
            <person name="Ricklefs S.M."/>
            <person name="Sturdevant D.E."/>
            <person name="Graham M.R."/>
            <person name="Vuopio-Varkila J."/>
            <person name="Hoe N.P."/>
            <person name="Musser J.M."/>
        </authorList>
    </citation>
    <scope>NUCLEOTIDE SEQUENCE [LARGE SCALE GENOMIC DNA]</scope>
    <source>
        <strain>ATCC BAA-947 / MGAS5005 / Serotype M1</strain>
    </source>
</reference>
<evidence type="ECO:0000255" key="1">
    <source>
        <dbReference type="HAMAP-Rule" id="MF_01420"/>
    </source>
</evidence>
<sequence>MSFTTKVKEELIHLSTGDNNELAAIIKLSGSLGLAHQSLHLSITTENAKIARYIYSLIEDAYVIVPEIRYHQKTNLRKNRVYTVYVEQGVETILADLKLADSFFGLETGIEPQVLSDDNAGRSYLKGAFLAAGSIRDPESGKYQLEIYSVYLDHAQDLAQLMQKFMLDAKTIEHKSGAVTYLQKAEDIMDFLIIIGAMSCKEDFEAIKLLREARNDINRANNAETANIAKTISASMKTINNIIKIMDTIGLESLPIELQQVAQLRVKHPDYSIQQVADALEFPITKSGVNHRLRKINKIADDL</sequence>
<organism>
    <name type="scientific">Streptococcus pyogenes serotype M1</name>
    <dbReference type="NCBI Taxonomy" id="301447"/>
    <lineage>
        <taxon>Bacteria</taxon>
        <taxon>Bacillati</taxon>
        <taxon>Bacillota</taxon>
        <taxon>Bacilli</taxon>
        <taxon>Lactobacillales</taxon>
        <taxon>Streptococcaceae</taxon>
        <taxon>Streptococcus</taxon>
    </lineage>
</organism>